<name>PYRG_SHEWM</name>
<comment type="function">
    <text evidence="1">Catalyzes the ATP-dependent amination of UTP to CTP with either L-glutamine or ammonia as the source of nitrogen. Regulates intracellular CTP levels through interactions with the four ribonucleotide triphosphates.</text>
</comment>
<comment type="catalytic activity">
    <reaction evidence="1">
        <text>UTP + L-glutamine + ATP + H2O = CTP + L-glutamate + ADP + phosphate + 2 H(+)</text>
        <dbReference type="Rhea" id="RHEA:26426"/>
        <dbReference type="ChEBI" id="CHEBI:15377"/>
        <dbReference type="ChEBI" id="CHEBI:15378"/>
        <dbReference type="ChEBI" id="CHEBI:29985"/>
        <dbReference type="ChEBI" id="CHEBI:30616"/>
        <dbReference type="ChEBI" id="CHEBI:37563"/>
        <dbReference type="ChEBI" id="CHEBI:43474"/>
        <dbReference type="ChEBI" id="CHEBI:46398"/>
        <dbReference type="ChEBI" id="CHEBI:58359"/>
        <dbReference type="ChEBI" id="CHEBI:456216"/>
        <dbReference type="EC" id="6.3.4.2"/>
    </reaction>
</comment>
<comment type="catalytic activity">
    <reaction evidence="1">
        <text>L-glutamine + H2O = L-glutamate + NH4(+)</text>
        <dbReference type="Rhea" id="RHEA:15889"/>
        <dbReference type="ChEBI" id="CHEBI:15377"/>
        <dbReference type="ChEBI" id="CHEBI:28938"/>
        <dbReference type="ChEBI" id="CHEBI:29985"/>
        <dbReference type="ChEBI" id="CHEBI:58359"/>
    </reaction>
</comment>
<comment type="catalytic activity">
    <reaction evidence="1">
        <text>UTP + NH4(+) + ATP = CTP + ADP + phosphate + 2 H(+)</text>
        <dbReference type="Rhea" id="RHEA:16597"/>
        <dbReference type="ChEBI" id="CHEBI:15378"/>
        <dbReference type="ChEBI" id="CHEBI:28938"/>
        <dbReference type="ChEBI" id="CHEBI:30616"/>
        <dbReference type="ChEBI" id="CHEBI:37563"/>
        <dbReference type="ChEBI" id="CHEBI:43474"/>
        <dbReference type="ChEBI" id="CHEBI:46398"/>
        <dbReference type="ChEBI" id="CHEBI:456216"/>
    </reaction>
</comment>
<comment type="activity regulation">
    <text evidence="1">Allosterically activated by GTP, when glutamine is the substrate; GTP has no effect on the reaction when ammonia is the substrate. The allosteric effector GTP functions by stabilizing the protein conformation that binds the tetrahedral intermediate(s) formed during glutamine hydrolysis. Inhibited by the product CTP, via allosteric rather than competitive inhibition.</text>
</comment>
<comment type="pathway">
    <text evidence="1">Pyrimidine metabolism; CTP biosynthesis via de novo pathway; CTP from UDP: step 2/2.</text>
</comment>
<comment type="subunit">
    <text evidence="1">Homotetramer.</text>
</comment>
<comment type="miscellaneous">
    <text evidence="1">CTPSs have evolved a hybrid strategy for distinguishing between UTP and CTP. The overlapping regions of the product feedback inhibitory and substrate sites recognize a common feature in both compounds, the triphosphate moiety. To differentiate isosteric substrate and product pyrimidine rings, an additional pocket far from the expected kinase/ligase catalytic site, specifically recognizes the cytosine and ribose portions of the product inhibitor.</text>
</comment>
<comment type="similarity">
    <text evidence="1">Belongs to the CTP synthase family.</text>
</comment>
<keyword id="KW-0067">ATP-binding</keyword>
<keyword id="KW-0315">Glutamine amidotransferase</keyword>
<keyword id="KW-0436">Ligase</keyword>
<keyword id="KW-0460">Magnesium</keyword>
<keyword id="KW-0479">Metal-binding</keyword>
<keyword id="KW-0547">Nucleotide-binding</keyword>
<keyword id="KW-0665">Pyrimidine biosynthesis</keyword>
<keyword id="KW-1185">Reference proteome</keyword>
<gene>
    <name evidence="1" type="primary">pyrG</name>
    <name type="ordered locus">Swoo_3351</name>
</gene>
<dbReference type="EC" id="6.3.4.2" evidence="1"/>
<dbReference type="EMBL" id="CP000961">
    <property type="protein sequence ID" value="ACA87620.1"/>
    <property type="molecule type" value="Genomic_DNA"/>
</dbReference>
<dbReference type="RefSeq" id="WP_012325955.1">
    <property type="nucleotide sequence ID" value="NC_010506.1"/>
</dbReference>
<dbReference type="SMR" id="B1KPT7"/>
<dbReference type="STRING" id="392500.Swoo_3351"/>
<dbReference type="KEGG" id="swd:Swoo_3351"/>
<dbReference type="eggNOG" id="COG0504">
    <property type="taxonomic scope" value="Bacteria"/>
</dbReference>
<dbReference type="HOGENOM" id="CLU_011675_5_0_6"/>
<dbReference type="UniPathway" id="UPA00159">
    <property type="reaction ID" value="UER00277"/>
</dbReference>
<dbReference type="Proteomes" id="UP000002168">
    <property type="component" value="Chromosome"/>
</dbReference>
<dbReference type="GO" id="GO:0005829">
    <property type="term" value="C:cytosol"/>
    <property type="evidence" value="ECO:0007669"/>
    <property type="project" value="TreeGrafter"/>
</dbReference>
<dbReference type="GO" id="GO:0005524">
    <property type="term" value="F:ATP binding"/>
    <property type="evidence" value="ECO:0007669"/>
    <property type="project" value="UniProtKB-KW"/>
</dbReference>
<dbReference type="GO" id="GO:0003883">
    <property type="term" value="F:CTP synthase activity"/>
    <property type="evidence" value="ECO:0007669"/>
    <property type="project" value="UniProtKB-UniRule"/>
</dbReference>
<dbReference type="GO" id="GO:0004359">
    <property type="term" value="F:glutaminase activity"/>
    <property type="evidence" value="ECO:0007669"/>
    <property type="project" value="RHEA"/>
</dbReference>
<dbReference type="GO" id="GO:0042802">
    <property type="term" value="F:identical protein binding"/>
    <property type="evidence" value="ECO:0007669"/>
    <property type="project" value="TreeGrafter"/>
</dbReference>
<dbReference type="GO" id="GO:0046872">
    <property type="term" value="F:metal ion binding"/>
    <property type="evidence" value="ECO:0007669"/>
    <property type="project" value="UniProtKB-KW"/>
</dbReference>
<dbReference type="GO" id="GO:0044210">
    <property type="term" value="P:'de novo' CTP biosynthetic process"/>
    <property type="evidence" value="ECO:0007669"/>
    <property type="project" value="UniProtKB-UniRule"/>
</dbReference>
<dbReference type="GO" id="GO:0019856">
    <property type="term" value="P:pyrimidine nucleobase biosynthetic process"/>
    <property type="evidence" value="ECO:0007669"/>
    <property type="project" value="TreeGrafter"/>
</dbReference>
<dbReference type="CDD" id="cd03113">
    <property type="entry name" value="CTPS_N"/>
    <property type="match status" value="1"/>
</dbReference>
<dbReference type="CDD" id="cd01746">
    <property type="entry name" value="GATase1_CTP_Synthase"/>
    <property type="match status" value="1"/>
</dbReference>
<dbReference type="FunFam" id="3.40.50.300:FF:000009">
    <property type="entry name" value="CTP synthase"/>
    <property type="match status" value="1"/>
</dbReference>
<dbReference type="FunFam" id="3.40.50.880:FF:000002">
    <property type="entry name" value="CTP synthase"/>
    <property type="match status" value="1"/>
</dbReference>
<dbReference type="Gene3D" id="3.40.50.880">
    <property type="match status" value="1"/>
</dbReference>
<dbReference type="Gene3D" id="3.40.50.300">
    <property type="entry name" value="P-loop containing nucleotide triphosphate hydrolases"/>
    <property type="match status" value="1"/>
</dbReference>
<dbReference type="HAMAP" id="MF_01227">
    <property type="entry name" value="PyrG"/>
    <property type="match status" value="1"/>
</dbReference>
<dbReference type="InterPro" id="IPR029062">
    <property type="entry name" value="Class_I_gatase-like"/>
</dbReference>
<dbReference type="InterPro" id="IPR004468">
    <property type="entry name" value="CTP_synthase"/>
</dbReference>
<dbReference type="InterPro" id="IPR017456">
    <property type="entry name" value="CTP_synthase_N"/>
</dbReference>
<dbReference type="InterPro" id="IPR017926">
    <property type="entry name" value="GATASE"/>
</dbReference>
<dbReference type="InterPro" id="IPR033828">
    <property type="entry name" value="GATase1_CTP_Synthase"/>
</dbReference>
<dbReference type="InterPro" id="IPR027417">
    <property type="entry name" value="P-loop_NTPase"/>
</dbReference>
<dbReference type="NCBIfam" id="NF003792">
    <property type="entry name" value="PRK05380.1"/>
    <property type="match status" value="1"/>
</dbReference>
<dbReference type="NCBIfam" id="TIGR00337">
    <property type="entry name" value="PyrG"/>
    <property type="match status" value="1"/>
</dbReference>
<dbReference type="PANTHER" id="PTHR11550">
    <property type="entry name" value="CTP SYNTHASE"/>
    <property type="match status" value="1"/>
</dbReference>
<dbReference type="PANTHER" id="PTHR11550:SF0">
    <property type="entry name" value="CTP SYNTHASE-RELATED"/>
    <property type="match status" value="1"/>
</dbReference>
<dbReference type="Pfam" id="PF06418">
    <property type="entry name" value="CTP_synth_N"/>
    <property type="match status" value="1"/>
</dbReference>
<dbReference type="Pfam" id="PF00117">
    <property type="entry name" value="GATase"/>
    <property type="match status" value="1"/>
</dbReference>
<dbReference type="SUPFAM" id="SSF52317">
    <property type="entry name" value="Class I glutamine amidotransferase-like"/>
    <property type="match status" value="1"/>
</dbReference>
<dbReference type="SUPFAM" id="SSF52540">
    <property type="entry name" value="P-loop containing nucleoside triphosphate hydrolases"/>
    <property type="match status" value="1"/>
</dbReference>
<dbReference type="PROSITE" id="PS51273">
    <property type="entry name" value="GATASE_TYPE_1"/>
    <property type="match status" value="1"/>
</dbReference>
<sequence>MTTRYIFVTGGVVSSLGKGIAAASLAAILEARGLNVTIMKLDPYINLDPGTMSPTQHGEVFVTEDGAETDLDLGHYERFIRTKMNRRNNFTTGRIYSEVLRKERRGDYLGATIQVIPHITNAIKEKVLDGGEGHDVAIVEIGGTVGDIESLPFLESIRQLGVELGRERTLFMHLTLVPFLGAAGEVKTKPTQHSVKELRSIGIAPDVLVCRGDRAIPANEKAKISLFCNVEERAVISLKDVDSIYKIPALLKAQGLDELVTKRFGIECKEADLHEWEQVIYQEANPTGDVTIGMVGKYIELPDAYKSVNEALKHAGLFNRVSVNIKYIDSQTVEAKGEEVLEGLDGILVPGGFGERGVEGKIFAAKYARENNLPYFGICLGMQVALIEFARHVAGLEGAHSTEFQKETPHPVVGLITEWLNEDGNVEQRHETSDLGGTMRLGAQLCHLEEGTKAAAAYQANTCVERHRHRYEVNNNYKDRLEKAGLVFSGLSSDRQLVEMIELPNHPWFVAGQFHPEFTSTPRDGQPLFVGFVAAAAAHQKRDLG</sequence>
<evidence type="ECO:0000255" key="1">
    <source>
        <dbReference type="HAMAP-Rule" id="MF_01227"/>
    </source>
</evidence>
<protein>
    <recommendedName>
        <fullName evidence="1">CTP synthase</fullName>
        <ecNumber evidence="1">6.3.4.2</ecNumber>
    </recommendedName>
    <alternativeName>
        <fullName evidence="1">Cytidine 5'-triphosphate synthase</fullName>
    </alternativeName>
    <alternativeName>
        <fullName evidence="1">Cytidine triphosphate synthetase</fullName>
        <shortName evidence="1">CTP synthetase</shortName>
        <shortName evidence="1">CTPS</shortName>
    </alternativeName>
    <alternativeName>
        <fullName evidence="1">UTP--ammonia ligase</fullName>
    </alternativeName>
</protein>
<accession>B1KPT7</accession>
<organism>
    <name type="scientific">Shewanella woodyi (strain ATCC 51908 / MS32)</name>
    <dbReference type="NCBI Taxonomy" id="392500"/>
    <lineage>
        <taxon>Bacteria</taxon>
        <taxon>Pseudomonadati</taxon>
        <taxon>Pseudomonadota</taxon>
        <taxon>Gammaproteobacteria</taxon>
        <taxon>Alteromonadales</taxon>
        <taxon>Shewanellaceae</taxon>
        <taxon>Shewanella</taxon>
    </lineage>
</organism>
<feature type="chain" id="PRO_1000139578" description="CTP synthase">
    <location>
        <begin position="1"/>
        <end position="545"/>
    </location>
</feature>
<feature type="domain" description="Glutamine amidotransferase type-1" evidence="1">
    <location>
        <begin position="291"/>
        <end position="542"/>
    </location>
</feature>
<feature type="region of interest" description="Amidoligase domain" evidence="1">
    <location>
        <begin position="1"/>
        <end position="266"/>
    </location>
</feature>
<feature type="active site" description="Nucleophile; for glutamine hydrolysis" evidence="1">
    <location>
        <position position="379"/>
    </location>
</feature>
<feature type="active site" evidence="1">
    <location>
        <position position="515"/>
    </location>
</feature>
<feature type="active site" evidence="1">
    <location>
        <position position="517"/>
    </location>
</feature>
<feature type="binding site" evidence="1">
    <location>
        <position position="14"/>
    </location>
    <ligand>
        <name>CTP</name>
        <dbReference type="ChEBI" id="CHEBI:37563"/>
        <note>allosteric inhibitor</note>
    </ligand>
</feature>
<feature type="binding site" evidence="1">
    <location>
        <position position="14"/>
    </location>
    <ligand>
        <name>UTP</name>
        <dbReference type="ChEBI" id="CHEBI:46398"/>
    </ligand>
</feature>
<feature type="binding site" evidence="1">
    <location>
        <begin position="15"/>
        <end position="20"/>
    </location>
    <ligand>
        <name>ATP</name>
        <dbReference type="ChEBI" id="CHEBI:30616"/>
    </ligand>
</feature>
<feature type="binding site" evidence="1">
    <location>
        <position position="72"/>
    </location>
    <ligand>
        <name>ATP</name>
        <dbReference type="ChEBI" id="CHEBI:30616"/>
    </ligand>
</feature>
<feature type="binding site" evidence="1">
    <location>
        <position position="72"/>
    </location>
    <ligand>
        <name>Mg(2+)</name>
        <dbReference type="ChEBI" id="CHEBI:18420"/>
    </ligand>
</feature>
<feature type="binding site" evidence="1">
    <location>
        <position position="140"/>
    </location>
    <ligand>
        <name>Mg(2+)</name>
        <dbReference type="ChEBI" id="CHEBI:18420"/>
    </ligand>
</feature>
<feature type="binding site" evidence="1">
    <location>
        <begin position="147"/>
        <end position="149"/>
    </location>
    <ligand>
        <name>CTP</name>
        <dbReference type="ChEBI" id="CHEBI:37563"/>
        <note>allosteric inhibitor</note>
    </ligand>
</feature>
<feature type="binding site" evidence="1">
    <location>
        <begin position="187"/>
        <end position="192"/>
    </location>
    <ligand>
        <name>CTP</name>
        <dbReference type="ChEBI" id="CHEBI:37563"/>
        <note>allosteric inhibitor</note>
    </ligand>
</feature>
<feature type="binding site" evidence="1">
    <location>
        <begin position="187"/>
        <end position="192"/>
    </location>
    <ligand>
        <name>UTP</name>
        <dbReference type="ChEBI" id="CHEBI:46398"/>
    </ligand>
</feature>
<feature type="binding site" evidence="1">
    <location>
        <position position="223"/>
    </location>
    <ligand>
        <name>CTP</name>
        <dbReference type="ChEBI" id="CHEBI:37563"/>
        <note>allosteric inhibitor</note>
    </ligand>
</feature>
<feature type="binding site" evidence="1">
    <location>
        <position position="223"/>
    </location>
    <ligand>
        <name>UTP</name>
        <dbReference type="ChEBI" id="CHEBI:46398"/>
    </ligand>
</feature>
<feature type="binding site" evidence="1">
    <location>
        <begin position="239"/>
        <end position="241"/>
    </location>
    <ligand>
        <name>ATP</name>
        <dbReference type="ChEBI" id="CHEBI:30616"/>
    </ligand>
</feature>
<feature type="binding site" evidence="1">
    <location>
        <position position="352"/>
    </location>
    <ligand>
        <name>L-glutamine</name>
        <dbReference type="ChEBI" id="CHEBI:58359"/>
    </ligand>
</feature>
<feature type="binding site" evidence="1">
    <location>
        <begin position="380"/>
        <end position="383"/>
    </location>
    <ligand>
        <name>L-glutamine</name>
        <dbReference type="ChEBI" id="CHEBI:58359"/>
    </ligand>
</feature>
<feature type="binding site" evidence="1">
    <location>
        <position position="403"/>
    </location>
    <ligand>
        <name>L-glutamine</name>
        <dbReference type="ChEBI" id="CHEBI:58359"/>
    </ligand>
</feature>
<feature type="binding site" evidence="1">
    <location>
        <position position="470"/>
    </location>
    <ligand>
        <name>L-glutamine</name>
        <dbReference type="ChEBI" id="CHEBI:58359"/>
    </ligand>
</feature>
<reference key="1">
    <citation type="submission" date="2008-02" db="EMBL/GenBank/DDBJ databases">
        <title>Complete sequence of Shewanella woodyi ATCC 51908.</title>
        <authorList>
            <consortium name="US DOE Joint Genome Institute"/>
            <person name="Copeland A."/>
            <person name="Lucas S."/>
            <person name="Lapidus A."/>
            <person name="Glavina del Rio T."/>
            <person name="Dalin E."/>
            <person name="Tice H."/>
            <person name="Bruce D."/>
            <person name="Goodwin L."/>
            <person name="Pitluck S."/>
            <person name="Sims D."/>
            <person name="Brettin T."/>
            <person name="Detter J.C."/>
            <person name="Han C."/>
            <person name="Kuske C.R."/>
            <person name="Schmutz J."/>
            <person name="Larimer F."/>
            <person name="Land M."/>
            <person name="Hauser L."/>
            <person name="Kyrpides N."/>
            <person name="Lykidis A."/>
            <person name="Zhao J.-S."/>
            <person name="Richardson P."/>
        </authorList>
    </citation>
    <scope>NUCLEOTIDE SEQUENCE [LARGE SCALE GENOMIC DNA]</scope>
    <source>
        <strain>ATCC 51908 / MS32</strain>
    </source>
</reference>
<proteinExistence type="inferred from homology"/>